<accession>B2TPX3</accession>
<comment type="function">
    <text evidence="1">Involved in the gluconeogenesis. Catalyzes stereospecifically the conversion of dihydroxyacetone phosphate (DHAP) to D-glyceraldehyde-3-phosphate (G3P).</text>
</comment>
<comment type="catalytic activity">
    <reaction evidence="1">
        <text>D-glyceraldehyde 3-phosphate = dihydroxyacetone phosphate</text>
        <dbReference type="Rhea" id="RHEA:18585"/>
        <dbReference type="ChEBI" id="CHEBI:57642"/>
        <dbReference type="ChEBI" id="CHEBI:59776"/>
        <dbReference type="EC" id="5.3.1.1"/>
    </reaction>
</comment>
<comment type="pathway">
    <text evidence="1">Carbohydrate biosynthesis; gluconeogenesis.</text>
</comment>
<comment type="pathway">
    <text evidence="1">Carbohydrate degradation; glycolysis; D-glyceraldehyde 3-phosphate from glycerone phosphate: step 1/1.</text>
</comment>
<comment type="subunit">
    <text evidence="1">Homodimer.</text>
</comment>
<comment type="subcellular location">
    <subcellularLocation>
        <location evidence="1">Cytoplasm</location>
    </subcellularLocation>
</comment>
<comment type="similarity">
    <text evidence="1">Belongs to the triosephosphate isomerase family.</text>
</comment>
<sequence>MRKAIIAGNWKMNKTVDEAVKVVEELKPLVKDATCDVVVCPTFVCLDAVKKATAGSNIKVAAQNMHFEESGAFTGEVAPGMLEAMGIEYVVLGHSERREYFNETDEAINKKVKAAFAHNITPIVCCGETLEQRESGVTNNFIACQIKVDIAGLTKEQAEKVVIAYEPIWAIGTGKTATKEQANETILAIRNVVVEMYGKEVADKVRIQYGGSVKPNTITEQMAMSDIDGALVGGASLKAEDFSGIVNY</sequence>
<organism>
    <name type="scientific">Clostridium botulinum (strain Eklund 17B / Type B)</name>
    <dbReference type="NCBI Taxonomy" id="935198"/>
    <lineage>
        <taxon>Bacteria</taxon>
        <taxon>Bacillati</taxon>
        <taxon>Bacillota</taxon>
        <taxon>Clostridia</taxon>
        <taxon>Eubacteriales</taxon>
        <taxon>Clostridiaceae</taxon>
        <taxon>Clostridium</taxon>
    </lineage>
</organism>
<name>TPIS_CLOBB</name>
<evidence type="ECO:0000255" key="1">
    <source>
        <dbReference type="HAMAP-Rule" id="MF_00147"/>
    </source>
</evidence>
<proteinExistence type="inferred from homology"/>
<keyword id="KW-0963">Cytoplasm</keyword>
<keyword id="KW-0312">Gluconeogenesis</keyword>
<keyword id="KW-0324">Glycolysis</keyword>
<keyword id="KW-0413">Isomerase</keyword>
<reference key="1">
    <citation type="submission" date="2008-04" db="EMBL/GenBank/DDBJ databases">
        <title>Complete sequence of Clostridium botulinum strain Eklund.</title>
        <authorList>
            <person name="Brinkac L.M."/>
            <person name="Brown J.L."/>
            <person name="Bruce D."/>
            <person name="Detter C."/>
            <person name="Munk C."/>
            <person name="Smith L.A."/>
            <person name="Smith T.J."/>
            <person name="Sutton G."/>
            <person name="Brettin T.S."/>
        </authorList>
    </citation>
    <scope>NUCLEOTIDE SEQUENCE [LARGE SCALE GENOMIC DNA]</scope>
    <source>
        <strain>Eklund 17B / Type B</strain>
    </source>
</reference>
<dbReference type="EC" id="5.3.1.1" evidence="1"/>
<dbReference type="EMBL" id="CP001056">
    <property type="protein sequence ID" value="ACD22909.1"/>
    <property type="molecule type" value="Genomic_DNA"/>
</dbReference>
<dbReference type="SMR" id="B2TPX3"/>
<dbReference type="KEGG" id="cbk:CLL_A3064"/>
<dbReference type="PATRIC" id="fig|935198.13.peg.3028"/>
<dbReference type="HOGENOM" id="CLU_024251_2_3_9"/>
<dbReference type="UniPathway" id="UPA00109">
    <property type="reaction ID" value="UER00189"/>
</dbReference>
<dbReference type="UniPathway" id="UPA00138"/>
<dbReference type="Proteomes" id="UP000001195">
    <property type="component" value="Chromosome"/>
</dbReference>
<dbReference type="GO" id="GO:0005829">
    <property type="term" value="C:cytosol"/>
    <property type="evidence" value="ECO:0007669"/>
    <property type="project" value="TreeGrafter"/>
</dbReference>
<dbReference type="GO" id="GO:0004807">
    <property type="term" value="F:triose-phosphate isomerase activity"/>
    <property type="evidence" value="ECO:0007669"/>
    <property type="project" value="UniProtKB-UniRule"/>
</dbReference>
<dbReference type="GO" id="GO:0006094">
    <property type="term" value="P:gluconeogenesis"/>
    <property type="evidence" value="ECO:0007669"/>
    <property type="project" value="UniProtKB-UniRule"/>
</dbReference>
<dbReference type="GO" id="GO:0046166">
    <property type="term" value="P:glyceraldehyde-3-phosphate biosynthetic process"/>
    <property type="evidence" value="ECO:0007669"/>
    <property type="project" value="TreeGrafter"/>
</dbReference>
<dbReference type="GO" id="GO:0019563">
    <property type="term" value="P:glycerol catabolic process"/>
    <property type="evidence" value="ECO:0007669"/>
    <property type="project" value="TreeGrafter"/>
</dbReference>
<dbReference type="GO" id="GO:0006096">
    <property type="term" value="P:glycolytic process"/>
    <property type="evidence" value="ECO:0007669"/>
    <property type="project" value="UniProtKB-UniRule"/>
</dbReference>
<dbReference type="CDD" id="cd00311">
    <property type="entry name" value="TIM"/>
    <property type="match status" value="1"/>
</dbReference>
<dbReference type="FunFam" id="3.20.20.70:FF:000016">
    <property type="entry name" value="Triosephosphate isomerase"/>
    <property type="match status" value="1"/>
</dbReference>
<dbReference type="Gene3D" id="3.20.20.70">
    <property type="entry name" value="Aldolase class I"/>
    <property type="match status" value="1"/>
</dbReference>
<dbReference type="HAMAP" id="MF_00147_B">
    <property type="entry name" value="TIM_B"/>
    <property type="match status" value="1"/>
</dbReference>
<dbReference type="InterPro" id="IPR013785">
    <property type="entry name" value="Aldolase_TIM"/>
</dbReference>
<dbReference type="InterPro" id="IPR035990">
    <property type="entry name" value="TIM_sf"/>
</dbReference>
<dbReference type="InterPro" id="IPR022896">
    <property type="entry name" value="TrioseP_Isoase_bac/euk"/>
</dbReference>
<dbReference type="InterPro" id="IPR000652">
    <property type="entry name" value="Triosephosphate_isomerase"/>
</dbReference>
<dbReference type="InterPro" id="IPR020861">
    <property type="entry name" value="Triosephosphate_isomerase_AS"/>
</dbReference>
<dbReference type="NCBIfam" id="TIGR00419">
    <property type="entry name" value="tim"/>
    <property type="match status" value="1"/>
</dbReference>
<dbReference type="PANTHER" id="PTHR21139">
    <property type="entry name" value="TRIOSEPHOSPHATE ISOMERASE"/>
    <property type="match status" value="1"/>
</dbReference>
<dbReference type="PANTHER" id="PTHR21139:SF42">
    <property type="entry name" value="TRIOSEPHOSPHATE ISOMERASE"/>
    <property type="match status" value="1"/>
</dbReference>
<dbReference type="Pfam" id="PF00121">
    <property type="entry name" value="TIM"/>
    <property type="match status" value="1"/>
</dbReference>
<dbReference type="SUPFAM" id="SSF51351">
    <property type="entry name" value="Triosephosphate isomerase (TIM)"/>
    <property type="match status" value="1"/>
</dbReference>
<dbReference type="PROSITE" id="PS00171">
    <property type="entry name" value="TIM_1"/>
    <property type="match status" value="1"/>
</dbReference>
<dbReference type="PROSITE" id="PS51440">
    <property type="entry name" value="TIM_2"/>
    <property type="match status" value="1"/>
</dbReference>
<feature type="chain" id="PRO_1000096487" description="Triosephosphate isomerase">
    <location>
        <begin position="1"/>
        <end position="248"/>
    </location>
</feature>
<feature type="active site" description="Electrophile" evidence="1">
    <location>
        <position position="94"/>
    </location>
</feature>
<feature type="active site" description="Proton acceptor" evidence="1">
    <location>
        <position position="166"/>
    </location>
</feature>
<feature type="binding site" evidence="1">
    <location>
        <begin position="9"/>
        <end position="11"/>
    </location>
    <ligand>
        <name>substrate</name>
    </ligand>
</feature>
<feature type="binding site" evidence="1">
    <location>
        <position position="172"/>
    </location>
    <ligand>
        <name>substrate</name>
    </ligand>
</feature>
<feature type="binding site" evidence="1">
    <location>
        <position position="212"/>
    </location>
    <ligand>
        <name>substrate</name>
    </ligand>
</feature>
<feature type="binding site" evidence="1">
    <location>
        <begin position="233"/>
        <end position="234"/>
    </location>
    <ligand>
        <name>substrate</name>
    </ligand>
</feature>
<gene>
    <name evidence="1" type="primary">tpiA</name>
    <name type="ordered locus">CLL_A3064</name>
</gene>
<protein>
    <recommendedName>
        <fullName evidence="1">Triosephosphate isomerase</fullName>
        <shortName evidence="1">TIM</shortName>
        <shortName evidence="1">TPI</shortName>
        <ecNumber evidence="1">5.3.1.1</ecNumber>
    </recommendedName>
    <alternativeName>
        <fullName evidence="1">Triose-phosphate isomerase</fullName>
    </alternativeName>
</protein>